<evidence type="ECO:0000250" key="1"/>
<evidence type="ECO:0000255" key="2">
    <source>
        <dbReference type="HAMAP-Rule" id="MF_00768"/>
    </source>
</evidence>
<dbReference type="EMBL" id="AE005174">
    <property type="protein sequence ID" value="AAG54655.1"/>
    <property type="molecule type" value="Genomic_DNA"/>
</dbReference>
<dbReference type="EMBL" id="BA000007">
    <property type="protein sequence ID" value="BAB33782.1"/>
    <property type="molecule type" value="Genomic_DNA"/>
</dbReference>
<dbReference type="PIR" id="C85524">
    <property type="entry name" value="C85524"/>
</dbReference>
<dbReference type="PIR" id="G90673">
    <property type="entry name" value="G90673"/>
</dbReference>
<dbReference type="RefSeq" id="NP_308386.3">
    <property type="nucleotide sequence ID" value="NC_002695.1"/>
</dbReference>
<dbReference type="RefSeq" id="WP_001301903.1">
    <property type="nucleotide sequence ID" value="NZ_VOAI01000005.1"/>
</dbReference>
<dbReference type="SMR" id="Q8X6C3"/>
<dbReference type="STRING" id="155864.Z0400"/>
<dbReference type="GeneID" id="75170284"/>
<dbReference type="GeneID" id="914460"/>
<dbReference type="KEGG" id="ece:Z0400"/>
<dbReference type="KEGG" id="ecs:ECs_0359"/>
<dbReference type="PATRIC" id="fig|386585.9.peg.451"/>
<dbReference type="eggNOG" id="COG1309">
    <property type="taxonomic scope" value="Bacteria"/>
</dbReference>
<dbReference type="HOGENOM" id="CLU_069356_15_4_6"/>
<dbReference type="OMA" id="EMEVWFA"/>
<dbReference type="UniPathway" id="UPA00529"/>
<dbReference type="Proteomes" id="UP000000558">
    <property type="component" value="Chromosome"/>
</dbReference>
<dbReference type="Proteomes" id="UP000002519">
    <property type="component" value="Chromosome"/>
</dbReference>
<dbReference type="GO" id="GO:0003700">
    <property type="term" value="F:DNA-binding transcription factor activity"/>
    <property type="evidence" value="ECO:0007669"/>
    <property type="project" value="UniProtKB-UniRule"/>
</dbReference>
<dbReference type="GO" id="GO:0000976">
    <property type="term" value="F:transcription cis-regulatory region binding"/>
    <property type="evidence" value="ECO:0007669"/>
    <property type="project" value="TreeGrafter"/>
</dbReference>
<dbReference type="GO" id="GO:0019285">
    <property type="term" value="P:glycine betaine biosynthetic process from choline"/>
    <property type="evidence" value="ECO:0007669"/>
    <property type="project" value="UniProtKB-UniRule"/>
</dbReference>
<dbReference type="GO" id="GO:0045892">
    <property type="term" value="P:negative regulation of DNA-templated transcription"/>
    <property type="evidence" value="ECO:0007669"/>
    <property type="project" value="UniProtKB-UniRule"/>
</dbReference>
<dbReference type="FunFam" id="1.10.357.10:FF:000009">
    <property type="entry name" value="HTH-type transcriptional regulator BetI"/>
    <property type="match status" value="1"/>
</dbReference>
<dbReference type="Gene3D" id="1.10.357.10">
    <property type="entry name" value="Tetracycline Repressor, domain 2"/>
    <property type="match status" value="1"/>
</dbReference>
<dbReference type="HAMAP" id="MF_00768">
    <property type="entry name" value="HTH_type_BetI"/>
    <property type="match status" value="1"/>
</dbReference>
<dbReference type="InterPro" id="IPR039538">
    <property type="entry name" value="BetI_C"/>
</dbReference>
<dbReference type="InterPro" id="IPR023772">
    <property type="entry name" value="DNA-bd_HTH_TetR-type_CS"/>
</dbReference>
<dbReference type="InterPro" id="IPR009057">
    <property type="entry name" value="Homeodomain-like_sf"/>
</dbReference>
<dbReference type="InterPro" id="IPR050109">
    <property type="entry name" value="HTH-type_TetR-like_transc_reg"/>
</dbReference>
<dbReference type="InterPro" id="IPR001647">
    <property type="entry name" value="HTH_TetR"/>
</dbReference>
<dbReference type="InterPro" id="IPR036271">
    <property type="entry name" value="Tet_transcr_reg_TetR-rel_C_sf"/>
</dbReference>
<dbReference type="InterPro" id="IPR017757">
    <property type="entry name" value="Tscrpt_rep_BetI"/>
</dbReference>
<dbReference type="NCBIfam" id="TIGR03384">
    <property type="entry name" value="betaine_BetI"/>
    <property type="match status" value="1"/>
</dbReference>
<dbReference type="NCBIfam" id="NF001978">
    <property type="entry name" value="PRK00767.1"/>
    <property type="match status" value="1"/>
</dbReference>
<dbReference type="PANTHER" id="PTHR30055:SF234">
    <property type="entry name" value="HTH-TYPE TRANSCRIPTIONAL REGULATOR BETI"/>
    <property type="match status" value="1"/>
</dbReference>
<dbReference type="PANTHER" id="PTHR30055">
    <property type="entry name" value="HTH-TYPE TRANSCRIPTIONAL REGULATOR RUTR"/>
    <property type="match status" value="1"/>
</dbReference>
<dbReference type="Pfam" id="PF13977">
    <property type="entry name" value="TetR_C_6"/>
    <property type="match status" value="1"/>
</dbReference>
<dbReference type="Pfam" id="PF00440">
    <property type="entry name" value="TetR_N"/>
    <property type="match status" value="1"/>
</dbReference>
<dbReference type="PRINTS" id="PR00455">
    <property type="entry name" value="HTHTETR"/>
</dbReference>
<dbReference type="SUPFAM" id="SSF46689">
    <property type="entry name" value="Homeodomain-like"/>
    <property type="match status" value="1"/>
</dbReference>
<dbReference type="SUPFAM" id="SSF48498">
    <property type="entry name" value="Tetracyclin repressor-like, C-terminal domain"/>
    <property type="match status" value="1"/>
</dbReference>
<dbReference type="PROSITE" id="PS01081">
    <property type="entry name" value="HTH_TETR_1"/>
    <property type="match status" value="1"/>
</dbReference>
<dbReference type="PROSITE" id="PS50977">
    <property type="entry name" value="HTH_TETR_2"/>
    <property type="match status" value="1"/>
</dbReference>
<feature type="chain" id="PRO_0000070582" description="HTH-type transcriptional regulator BetI">
    <location>
        <begin position="1"/>
        <end position="195"/>
    </location>
</feature>
<feature type="domain" description="HTH tetR-type" evidence="2">
    <location>
        <begin position="8"/>
        <end position="68"/>
    </location>
</feature>
<feature type="DNA-binding region" description="H-T-H motif" evidence="2">
    <location>
        <begin position="31"/>
        <end position="50"/>
    </location>
</feature>
<name>BETI_ECO57</name>
<accession>Q8X6C3</accession>
<reference key="1">
    <citation type="journal article" date="2001" name="Nature">
        <title>Genome sequence of enterohaemorrhagic Escherichia coli O157:H7.</title>
        <authorList>
            <person name="Perna N.T."/>
            <person name="Plunkett G. III"/>
            <person name="Burland V."/>
            <person name="Mau B."/>
            <person name="Glasner J.D."/>
            <person name="Rose D.J."/>
            <person name="Mayhew G.F."/>
            <person name="Evans P.S."/>
            <person name="Gregor J."/>
            <person name="Kirkpatrick H.A."/>
            <person name="Posfai G."/>
            <person name="Hackett J."/>
            <person name="Klink S."/>
            <person name="Boutin A."/>
            <person name="Shao Y."/>
            <person name="Miller L."/>
            <person name="Grotbeck E.J."/>
            <person name="Davis N.W."/>
            <person name="Lim A."/>
            <person name="Dimalanta E.T."/>
            <person name="Potamousis K."/>
            <person name="Apodaca J."/>
            <person name="Anantharaman T.S."/>
            <person name="Lin J."/>
            <person name="Yen G."/>
            <person name="Schwartz D.C."/>
            <person name="Welch R.A."/>
            <person name="Blattner F.R."/>
        </authorList>
    </citation>
    <scope>NUCLEOTIDE SEQUENCE [LARGE SCALE GENOMIC DNA]</scope>
    <source>
        <strain>O157:H7 / EDL933 / ATCC 700927 / EHEC</strain>
    </source>
</reference>
<reference key="2">
    <citation type="journal article" date="2001" name="DNA Res.">
        <title>Complete genome sequence of enterohemorrhagic Escherichia coli O157:H7 and genomic comparison with a laboratory strain K-12.</title>
        <authorList>
            <person name="Hayashi T."/>
            <person name="Makino K."/>
            <person name="Ohnishi M."/>
            <person name="Kurokawa K."/>
            <person name="Ishii K."/>
            <person name="Yokoyama K."/>
            <person name="Han C.-G."/>
            <person name="Ohtsubo E."/>
            <person name="Nakayama K."/>
            <person name="Murata T."/>
            <person name="Tanaka M."/>
            <person name="Tobe T."/>
            <person name="Iida T."/>
            <person name="Takami H."/>
            <person name="Honda T."/>
            <person name="Sasakawa C."/>
            <person name="Ogasawara N."/>
            <person name="Yasunaga T."/>
            <person name="Kuhara S."/>
            <person name="Shiba T."/>
            <person name="Hattori M."/>
            <person name="Shinagawa H."/>
        </authorList>
    </citation>
    <scope>NUCLEOTIDE SEQUENCE [LARGE SCALE GENOMIC DNA]</scope>
    <source>
        <strain>O157:H7 / Sakai / RIMD 0509952 / EHEC</strain>
    </source>
</reference>
<proteinExistence type="inferred from homology"/>
<keyword id="KW-0238">DNA-binding</keyword>
<keyword id="KW-1185">Reference proteome</keyword>
<keyword id="KW-0678">Repressor</keyword>
<keyword id="KW-0804">Transcription</keyword>
<keyword id="KW-0805">Transcription regulation</keyword>
<sequence>MPKLGMQSIRRRQLIDATLEAINEVGMHDATIAQIARRAGVSTGIISHYFRDKNGLLEATMRDITSQLRDAVLNRLHALPQGSAEQRLQAIVGGNFDETQVSSAAMKAWLAFWASSMHQPMLYRLQQVSSRRLLSNLVSEFRRELPRHQAQEAGYGLAALIDGLWLRAALSGKPLDKPLAHSLTRHFITQHLPTD</sequence>
<gene>
    <name evidence="2" type="primary">betI</name>
    <name type="ordered locus">Z0400</name>
    <name type="ordered locus">ECs0359</name>
</gene>
<comment type="function">
    <text evidence="1">Repressor involved in the biosynthesis of the osmoprotectant glycine betaine. It represses transcription of the choline transporter BetT and the genes of BetAB involved in the synthesis of glycine betaine (By similarity).</text>
</comment>
<comment type="pathway">
    <text>Amine and polyamine biosynthesis; betaine biosynthesis via choline pathway [regulation].</text>
</comment>
<organism>
    <name type="scientific">Escherichia coli O157:H7</name>
    <dbReference type="NCBI Taxonomy" id="83334"/>
    <lineage>
        <taxon>Bacteria</taxon>
        <taxon>Pseudomonadati</taxon>
        <taxon>Pseudomonadota</taxon>
        <taxon>Gammaproteobacteria</taxon>
        <taxon>Enterobacterales</taxon>
        <taxon>Enterobacteriaceae</taxon>
        <taxon>Escherichia</taxon>
    </lineage>
</organism>
<protein>
    <recommendedName>
        <fullName evidence="2">HTH-type transcriptional regulator BetI</fullName>
    </recommendedName>
</protein>